<gene>
    <name type="primary">nrfE</name>
    <name type="ordered locus">HI_0936</name>
</gene>
<evidence type="ECO:0000250" key="1"/>
<evidence type="ECO:0000255" key="2"/>
<evidence type="ECO:0000305" key="3"/>
<accession>P44944</accession>
<organism>
    <name type="scientific">Haemophilus influenzae (strain ATCC 51907 / DSM 11121 / KW20 / Rd)</name>
    <dbReference type="NCBI Taxonomy" id="71421"/>
    <lineage>
        <taxon>Bacteria</taxon>
        <taxon>Pseudomonadati</taxon>
        <taxon>Pseudomonadota</taxon>
        <taxon>Gammaproteobacteria</taxon>
        <taxon>Pasteurellales</taxon>
        <taxon>Pasteurellaceae</taxon>
        <taxon>Haemophilus</taxon>
    </lineage>
</organism>
<comment type="function">
    <text evidence="1">Required for the biogenesis of c-type cytochromes. Possible subunit of a heme lyase (By similarity).</text>
</comment>
<comment type="subcellular location">
    <subcellularLocation>
        <location evidence="1">Cell inner membrane</location>
        <topology evidence="1">Multi-pass membrane protein</topology>
    </subcellularLocation>
</comment>
<comment type="similarity">
    <text evidence="3">Belongs to the CcmF/CycK/Ccl1/NrfE/CcsA family.</text>
</comment>
<reference key="1">
    <citation type="journal article" date="1995" name="Science">
        <title>Whole-genome random sequencing and assembly of Haemophilus influenzae Rd.</title>
        <authorList>
            <person name="Fleischmann R.D."/>
            <person name="Adams M.D."/>
            <person name="White O."/>
            <person name="Clayton R.A."/>
            <person name="Kirkness E.F."/>
            <person name="Kerlavage A.R."/>
            <person name="Bult C.J."/>
            <person name="Tomb J.-F."/>
            <person name="Dougherty B.A."/>
            <person name="Merrick J.M."/>
            <person name="McKenney K."/>
            <person name="Sutton G.G."/>
            <person name="FitzHugh W."/>
            <person name="Fields C.A."/>
            <person name="Gocayne J.D."/>
            <person name="Scott J.D."/>
            <person name="Shirley R."/>
            <person name="Liu L.-I."/>
            <person name="Glodek A."/>
            <person name="Kelley J.M."/>
            <person name="Weidman J.F."/>
            <person name="Phillips C.A."/>
            <person name="Spriggs T."/>
            <person name="Hedblom E."/>
            <person name="Cotton M.D."/>
            <person name="Utterback T.R."/>
            <person name="Hanna M.C."/>
            <person name="Nguyen D.T."/>
            <person name="Saudek D.M."/>
            <person name="Brandon R.C."/>
            <person name="Fine L.D."/>
            <person name="Fritchman J.L."/>
            <person name="Fuhrmann J.L."/>
            <person name="Geoghagen N.S.M."/>
            <person name="Gnehm C.L."/>
            <person name="McDonald L.A."/>
            <person name="Small K.V."/>
            <person name="Fraser C.M."/>
            <person name="Smith H.O."/>
            <person name="Venter J.C."/>
        </authorList>
    </citation>
    <scope>NUCLEOTIDE SEQUENCE [LARGE SCALE GENOMIC DNA]</scope>
    <source>
        <strain>ATCC 51907 / DSM 11121 / KW20 / Rd</strain>
    </source>
</reference>
<keyword id="KW-0997">Cell inner membrane</keyword>
<keyword id="KW-1003">Cell membrane</keyword>
<keyword id="KW-0201">Cytochrome c-type biogenesis</keyword>
<keyword id="KW-0472">Membrane</keyword>
<keyword id="KW-1185">Reference proteome</keyword>
<keyword id="KW-0812">Transmembrane</keyword>
<keyword id="KW-1133">Transmembrane helix</keyword>
<sequence>MLPELGFFLLLLATASAFFLALVPQFGLFKKNPTLINAAWPLSYIFTLATTLSIGLLAYSFAVDDFTLEYVAAHSNSQLPTFFKVAATWGGHEGSMLFWLFSLSLWLAAFAFFNRKNDRTFSAQSLSLLGLICFGFAVFILFYSNPFGRIFPAPAEGRDLNPMLQDVGLIFHPPLLYVGYVGFAVNFAMSLSALIYNQSARQIARSMRGWVLVSWLFLTIGIVLGAWWAYYELGWGGWWFWDPVENASLMPWLLGLALLHSLMATEKQGVFSYWTTLFSLLAFAFSVLGTFIVRSGALTSVHAFALDNTRGYVLLLIFFVLTALAFGLFALRAGSSSESAVKFQFISKSGGILLLNILLTIATVSTFLGTFYPMLFQAMNWGSISVGSPYFNSIFFPIITAILILMVIVLSIRKGQFDRTLLIRCGWLLIPSLILAGLMIWQQLRNNSALHFHAFAFVLLTLAIWLLFVTLWQNWRQIRLSQFGMILAHCGVAIVTIGAVMSGYFGSEIGVRLAPQQSQTLGQYEFHYRQFSNEIGPNFTAEVAFFDVTKNGKPYAEIIPERRYYDVRTMTMSEVGLDGGFWGDLYIVMGDSLGKGEFTFRLHYKPLIRWLWAGGILMAFGALFSVFGLRRKQEK</sequence>
<dbReference type="EMBL" id="L42023">
    <property type="protein sequence ID" value="AAC22594.1"/>
    <property type="molecule type" value="Genomic_DNA"/>
</dbReference>
<dbReference type="PIR" id="A64162">
    <property type="entry name" value="A64162"/>
</dbReference>
<dbReference type="RefSeq" id="NP_439096.1">
    <property type="nucleotide sequence ID" value="NC_000907.1"/>
</dbReference>
<dbReference type="SMR" id="P44944"/>
<dbReference type="STRING" id="71421.HI_0936"/>
<dbReference type="EnsemblBacteria" id="AAC22594">
    <property type="protein sequence ID" value="AAC22594"/>
    <property type="gene ID" value="HI_0936"/>
</dbReference>
<dbReference type="KEGG" id="hin:HI_0936"/>
<dbReference type="PATRIC" id="fig|71421.8.peg.977"/>
<dbReference type="eggNOG" id="COG1138">
    <property type="taxonomic scope" value="Bacteria"/>
</dbReference>
<dbReference type="HOGENOM" id="CLU_015041_3_0_6"/>
<dbReference type="OrthoDB" id="9761451at2"/>
<dbReference type="PhylomeDB" id="P44944"/>
<dbReference type="BioCyc" id="HINF71421:G1GJ1-976-MONOMER"/>
<dbReference type="Proteomes" id="UP000000579">
    <property type="component" value="Chromosome"/>
</dbReference>
<dbReference type="GO" id="GO:0005886">
    <property type="term" value="C:plasma membrane"/>
    <property type="evidence" value="ECO:0007669"/>
    <property type="project" value="UniProtKB-SubCell"/>
</dbReference>
<dbReference type="GO" id="GO:0020037">
    <property type="term" value="F:heme binding"/>
    <property type="evidence" value="ECO:0007669"/>
    <property type="project" value="InterPro"/>
</dbReference>
<dbReference type="GO" id="GO:0015232">
    <property type="term" value="F:heme transmembrane transporter activity"/>
    <property type="evidence" value="ECO:0007669"/>
    <property type="project" value="InterPro"/>
</dbReference>
<dbReference type="GO" id="GO:0017004">
    <property type="term" value="P:cytochrome complex assembly"/>
    <property type="evidence" value="ECO:0007669"/>
    <property type="project" value="UniProtKB-KW"/>
</dbReference>
<dbReference type="InterPro" id="IPR032523">
    <property type="entry name" value="CcmF_C"/>
</dbReference>
<dbReference type="InterPro" id="IPR002541">
    <property type="entry name" value="Cyt_c_assembly"/>
</dbReference>
<dbReference type="InterPro" id="IPR003567">
    <property type="entry name" value="Cyt_c_biogenesis"/>
</dbReference>
<dbReference type="InterPro" id="IPR003568">
    <property type="entry name" value="Cyt_c_biogenesis_CcmF"/>
</dbReference>
<dbReference type="InterPro" id="IPR003570">
    <property type="entry name" value="Cyt_c_biogenesis_NrfE"/>
</dbReference>
<dbReference type="InterPro" id="IPR017563">
    <property type="entry name" value="CytC_NO3Rdtase_biogenesis_NrfE"/>
</dbReference>
<dbReference type="NCBIfam" id="TIGR03145">
    <property type="entry name" value="cyt_nit_nrfE"/>
    <property type="match status" value="1"/>
</dbReference>
<dbReference type="NCBIfam" id="TIGR00353">
    <property type="entry name" value="nrfE"/>
    <property type="match status" value="1"/>
</dbReference>
<dbReference type="NCBIfam" id="NF007691">
    <property type="entry name" value="PRK10369.1"/>
    <property type="match status" value="1"/>
</dbReference>
<dbReference type="PANTHER" id="PTHR43653">
    <property type="entry name" value="CYTOCHROME C ASSEMBLY PROTEIN-RELATED"/>
    <property type="match status" value="1"/>
</dbReference>
<dbReference type="PANTHER" id="PTHR43653:SF1">
    <property type="entry name" value="CYTOCHROME C-TYPE BIOGENESIS PROTEIN CCMF"/>
    <property type="match status" value="1"/>
</dbReference>
<dbReference type="Pfam" id="PF16327">
    <property type="entry name" value="CcmF_C"/>
    <property type="match status" value="1"/>
</dbReference>
<dbReference type="Pfam" id="PF01578">
    <property type="entry name" value="Cytochrom_C_asm"/>
    <property type="match status" value="1"/>
</dbReference>
<dbReference type="PRINTS" id="PR01410">
    <property type="entry name" value="CCBIOGENESIS"/>
</dbReference>
<dbReference type="PRINTS" id="PR01413">
    <property type="entry name" value="NRFEBIOGNSIS"/>
</dbReference>
<name>NRFE_HAEIN</name>
<proteinExistence type="inferred from homology"/>
<feature type="chain" id="PRO_0000201590" description="Cytochrome c-type biogenesis protein NrfE">
    <location>
        <begin position="1"/>
        <end position="635"/>
    </location>
</feature>
<feature type="transmembrane region" description="Helical" evidence="2">
    <location>
        <begin position="6"/>
        <end position="26"/>
    </location>
</feature>
<feature type="transmembrane region" description="Helical" evidence="2">
    <location>
        <begin position="38"/>
        <end position="58"/>
    </location>
</feature>
<feature type="transmembrane region" description="Helical" evidence="2">
    <location>
        <begin position="93"/>
        <end position="113"/>
    </location>
</feature>
<feature type="transmembrane region" description="Helical" evidence="2">
    <location>
        <begin position="128"/>
        <end position="148"/>
    </location>
</feature>
<feature type="transmembrane region" description="Helical" evidence="2">
    <location>
        <begin position="167"/>
        <end position="187"/>
    </location>
</feature>
<feature type="transmembrane region" description="Helical" evidence="2">
    <location>
        <begin position="209"/>
        <end position="229"/>
    </location>
</feature>
<feature type="transmembrane region" description="Helical" evidence="2">
    <location>
        <begin position="239"/>
        <end position="259"/>
    </location>
</feature>
<feature type="transmembrane region" description="Helical" evidence="2">
    <location>
        <begin position="273"/>
        <end position="293"/>
    </location>
</feature>
<feature type="transmembrane region" description="Helical" evidence="2">
    <location>
        <begin position="311"/>
        <end position="331"/>
    </location>
</feature>
<feature type="transmembrane region" description="Helical" evidence="2">
    <location>
        <begin position="351"/>
        <end position="371"/>
    </location>
</feature>
<feature type="transmembrane region" description="Helical" evidence="2">
    <location>
        <begin position="390"/>
        <end position="410"/>
    </location>
</feature>
<feature type="transmembrane region" description="Helical" evidence="2">
    <location>
        <begin position="421"/>
        <end position="441"/>
    </location>
</feature>
<feature type="transmembrane region" description="Helical" evidence="2">
    <location>
        <begin position="452"/>
        <end position="472"/>
    </location>
</feature>
<feature type="transmembrane region" description="Helical" evidence="2">
    <location>
        <begin position="483"/>
        <end position="503"/>
    </location>
</feature>
<feature type="transmembrane region" description="Helical" evidence="2">
    <location>
        <begin position="570"/>
        <end position="590"/>
    </location>
</feature>
<feature type="transmembrane region" description="Helical" evidence="2">
    <location>
        <begin position="607"/>
        <end position="627"/>
    </location>
</feature>
<protein>
    <recommendedName>
        <fullName>Cytochrome c-type biogenesis protein NrfE</fullName>
    </recommendedName>
</protein>